<feature type="chain" id="PRO_0000270898" description="Type III pantothenate kinase">
    <location>
        <begin position="1"/>
        <end position="273"/>
    </location>
</feature>
<feature type="active site" description="Proton acceptor" evidence="1">
    <location>
        <position position="126"/>
    </location>
</feature>
<feature type="binding site" evidence="1">
    <location>
        <begin position="7"/>
        <end position="14"/>
    </location>
    <ligand>
        <name>ATP</name>
        <dbReference type="ChEBI" id="CHEBI:30616"/>
    </ligand>
</feature>
<feature type="binding site" evidence="1">
    <location>
        <position position="119"/>
    </location>
    <ligand>
        <name>substrate</name>
    </ligand>
</feature>
<feature type="binding site" evidence="1">
    <location>
        <begin position="124"/>
        <end position="127"/>
    </location>
    <ligand>
        <name>substrate</name>
    </ligand>
</feature>
<feature type="binding site" evidence="1">
    <location>
        <position position="146"/>
    </location>
    <ligand>
        <name>K(+)</name>
        <dbReference type="ChEBI" id="CHEBI:29103"/>
    </ligand>
</feature>
<feature type="binding site" evidence="1">
    <location>
        <position position="149"/>
    </location>
    <ligand>
        <name>ATP</name>
        <dbReference type="ChEBI" id="CHEBI:30616"/>
    </ligand>
</feature>
<feature type="binding site" evidence="1">
    <location>
        <position position="206"/>
    </location>
    <ligand>
        <name>substrate</name>
    </ligand>
</feature>
<accession>Q7UVH5</accession>
<sequence length="273" mass="29051">MVRVGIDVGNTAIKVVTQASTAVEAAQPARTRGPQLRSISLRDPEWITKCIEHLQTLAEKVAACESRECESVCYDVRVASVNRGSAEPLVFALDEAFFQCIRVRFVTHEDVSMPIDVNFPERVGIDRLLGAEAAFRRHAAPLIVVDAGTTVTVDFVSAEGVFRGGAILPGLEMQTAALAAGTDALPKLDWASHRCREMPEGPGRDTVAAMRLGVLASVAGAVERLLRIYGGAATLVVTGGDAGCLVDALPAECDAVEEPHLVAQALLDLMLHE</sequence>
<organism>
    <name type="scientific">Rhodopirellula baltica (strain DSM 10527 / NCIMB 13988 / SH1)</name>
    <dbReference type="NCBI Taxonomy" id="243090"/>
    <lineage>
        <taxon>Bacteria</taxon>
        <taxon>Pseudomonadati</taxon>
        <taxon>Planctomycetota</taxon>
        <taxon>Planctomycetia</taxon>
        <taxon>Pirellulales</taxon>
        <taxon>Pirellulaceae</taxon>
        <taxon>Rhodopirellula</taxon>
    </lineage>
</organism>
<dbReference type="EC" id="2.7.1.33" evidence="1"/>
<dbReference type="EMBL" id="BX294137">
    <property type="protein sequence ID" value="CAD72749.1"/>
    <property type="status" value="ALT_INIT"/>
    <property type="molecule type" value="Genomic_DNA"/>
</dbReference>
<dbReference type="RefSeq" id="NP_865065.1">
    <property type="nucleotide sequence ID" value="NC_005027.1"/>
</dbReference>
<dbReference type="RefSeq" id="WP_011118958.1">
    <property type="nucleotide sequence ID" value="NC_005027.1"/>
</dbReference>
<dbReference type="SMR" id="Q7UVH5"/>
<dbReference type="STRING" id="243090.RB2632"/>
<dbReference type="EnsemblBacteria" id="CAD72749">
    <property type="protein sequence ID" value="CAD72749"/>
    <property type="gene ID" value="RB2632"/>
</dbReference>
<dbReference type="KEGG" id="rba:RB2632"/>
<dbReference type="PATRIC" id="fig|243090.15.peg.1207"/>
<dbReference type="eggNOG" id="COG1521">
    <property type="taxonomic scope" value="Bacteria"/>
</dbReference>
<dbReference type="HOGENOM" id="CLU_942938_0_0_0"/>
<dbReference type="InParanoid" id="Q7UVH5"/>
<dbReference type="OrthoDB" id="9804707at2"/>
<dbReference type="UniPathway" id="UPA00241">
    <property type="reaction ID" value="UER00352"/>
</dbReference>
<dbReference type="Proteomes" id="UP000001025">
    <property type="component" value="Chromosome"/>
</dbReference>
<dbReference type="GO" id="GO:0005737">
    <property type="term" value="C:cytoplasm"/>
    <property type="evidence" value="ECO:0007669"/>
    <property type="project" value="UniProtKB-SubCell"/>
</dbReference>
<dbReference type="GO" id="GO:0005524">
    <property type="term" value="F:ATP binding"/>
    <property type="evidence" value="ECO:0007669"/>
    <property type="project" value="UniProtKB-UniRule"/>
</dbReference>
<dbReference type="GO" id="GO:0046872">
    <property type="term" value="F:metal ion binding"/>
    <property type="evidence" value="ECO:0007669"/>
    <property type="project" value="UniProtKB-KW"/>
</dbReference>
<dbReference type="GO" id="GO:0004594">
    <property type="term" value="F:pantothenate kinase activity"/>
    <property type="evidence" value="ECO:0007669"/>
    <property type="project" value="UniProtKB-UniRule"/>
</dbReference>
<dbReference type="GO" id="GO:0015937">
    <property type="term" value="P:coenzyme A biosynthetic process"/>
    <property type="evidence" value="ECO:0007669"/>
    <property type="project" value="UniProtKB-UniRule"/>
</dbReference>
<dbReference type="CDD" id="cd24015">
    <property type="entry name" value="ASKHA_NBD_PanK-III"/>
    <property type="match status" value="1"/>
</dbReference>
<dbReference type="Gene3D" id="3.30.420.40">
    <property type="match status" value="2"/>
</dbReference>
<dbReference type="HAMAP" id="MF_01274">
    <property type="entry name" value="Pantothen_kinase_3"/>
    <property type="match status" value="1"/>
</dbReference>
<dbReference type="InterPro" id="IPR043129">
    <property type="entry name" value="ATPase_NBD"/>
</dbReference>
<dbReference type="InterPro" id="IPR004619">
    <property type="entry name" value="Type_III_PanK"/>
</dbReference>
<dbReference type="NCBIfam" id="TIGR00671">
    <property type="entry name" value="baf"/>
    <property type="match status" value="1"/>
</dbReference>
<dbReference type="PANTHER" id="PTHR34265">
    <property type="entry name" value="TYPE III PANTOTHENATE KINASE"/>
    <property type="match status" value="1"/>
</dbReference>
<dbReference type="PANTHER" id="PTHR34265:SF1">
    <property type="entry name" value="TYPE III PANTOTHENATE KINASE"/>
    <property type="match status" value="1"/>
</dbReference>
<dbReference type="Pfam" id="PF03309">
    <property type="entry name" value="Pan_kinase"/>
    <property type="match status" value="1"/>
</dbReference>
<dbReference type="SUPFAM" id="SSF53067">
    <property type="entry name" value="Actin-like ATPase domain"/>
    <property type="match status" value="2"/>
</dbReference>
<protein>
    <recommendedName>
        <fullName evidence="1">Type III pantothenate kinase</fullName>
        <ecNumber evidence="1">2.7.1.33</ecNumber>
    </recommendedName>
    <alternativeName>
        <fullName evidence="1">PanK-III</fullName>
    </alternativeName>
    <alternativeName>
        <fullName evidence="1">Pantothenic acid kinase</fullName>
    </alternativeName>
</protein>
<gene>
    <name evidence="1" type="primary">coaX</name>
    <name type="ordered locus">RB2632</name>
</gene>
<evidence type="ECO:0000255" key="1">
    <source>
        <dbReference type="HAMAP-Rule" id="MF_01274"/>
    </source>
</evidence>
<evidence type="ECO:0000305" key="2"/>
<proteinExistence type="inferred from homology"/>
<name>COAX_RHOBA</name>
<keyword id="KW-0067">ATP-binding</keyword>
<keyword id="KW-0173">Coenzyme A biosynthesis</keyword>
<keyword id="KW-0963">Cytoplasm</keyword>
<keyword id="KW-0418">Kinase</keyword>
<keyword id="KW-0479">Metal-binding</keyword>
<keyword id="KW-0547">Nucleotide-binding</keyword>
<keyword id="KW-0630">Potassium</keyword>
<keyword id="KW-1185">Reference proteome</keyword>
<keyword id="KW-0808">Transferase</keyword>
<reference key="1">
    <citation type="journal article" date="2003" name="Proc. Natl. Acad. Sci. U.S.A.">
        <title>Complete genome sequence of the marine planctomycete Pirellula sp. strain 1.</title>
        <authorList>
            <person name="Gloeckner F.O."/>
            <person name="Kube M."/>
            <person name="Bauer M."/>
            <person name="Teeling H."/>
            <person name="Lombardot T."/>
            <person name="Ludwig W."/>
            <person name="Gade D."/>
            <person name="Beck A."/>
            <person name="Borzym K."/>
            <person name="Heitmann K."/>
            <person name="Rabus R."/>
            <person name="Schlesner H."/>
            <person name="Amann R."/>
            <person name="Reinhardt R."/>
        </authorList>
    </citation>
    <scope>NUCLEOTIDE SEQUENCE [LARGE SCALE GENOMIC DNA]</scope>
    <source>
        <strain>DSM 10527 / NCIMB 13988 / SH1</strain>
    </source>
</reference>
<comment type="function">
    <text evidence="1">Catalyzes the phosphorylation of pantothenate (Pan), the first step in CoA biosynthesis.</text>
</comment>
<comment type="catalytic activity">
    <reaction evidence="1">
        <text>(R)-pantothenate + ATP = (R)-4'-phosphopantothenate + ADP + H(+)</text>
        <dbReference type="Rhea" id="RHEA:16373"/>
        <dbReference type="ChEBI" id="CHEBI:10986"/>
        <dbReference type="ChEBI" id="CHEBI:15378"/>
        <dbReference type="ChEBI" id="CHEBI:29032"/>
        <dbReference type="ChEBI" id="CHEBI:30616"/>
        <dbReference type="ChEBI" id="CHEBI:456216"/>
        <dbReference type="EC" id="2.7.1.33"/>
    </reaction>
</comment>
<comment type="cofactor">
    <cofactor evidence="1">
        <name>NH4(+)</name>
        <dbReference type="ChEBI" id="CHEBI:28938"/>
    </cofactor>
    <cofactor evidence="1">
        <name>K(+)</name>
        <dbReference type="ChEBI" id="CHEBI:29103"/>
    </cofactor>
    <text evidence="1">A monovalent cation. Ammonium or potassium.</text>
</comment>
<comment type="pathway">
    <text evidence="1">Cofactor biosynthesis; coenzyme A biosynthesis; CoA from (R)-pantothenate: step 1/5.</text>
</comment>
<comment type="subunit">
    <text evidence="1">Homodimer.</text>
</comment>
<comment type="subcellular location">
    <subcellularLocation>
        <location evidence="1">Cytoplasm</location>
    </subcellularLocation>
</comment>
<comment type="similarity">
    <text evidence="1">Belongs to the type III pantothenate kinase family.</text>
</comment>
<comment type="sequence caution" evidence="2">
    <conflict type="erroneous initiation">
        <sequence resource="EMBL-CDS" id="CAD72749"/>
    </conflict>
</comment>